<feature type="chain" id="PRO_0000387433" description="tRNA1(Val) (adenine(37)-N6)-methyltransferase">
    <location>
        <begin position="1"/>
        <end position="245"/>
    </location>
</feature>
<dbReference type="EC" id="2.1.1.223" evidence="1"/>
<dbReference type="EMBL" id="CP001063">
    <property type="protein sequence ID" value="ACD07847.1"/>
    <property type="molecule type" value="Genomic_DNA"/>
</dbReference>
<dbReference type="SMR" id="B2TYI8"/>
<dbReference type="STRING" id="344609.SbBS512_E2942"/>
<dbReference type="KEGG" id="sbc:SbBS512_E2942"/>
<dbReference type="HOGENOM" id="CLU_061983_0_0_6"/>
<dbReference type="Proteomes" id="UP000001030">
    <property type="component" value="Chromosome"/>
</dbReference>
<dbReference type="GO" id="GO:0005737">
    <property type="term" value="C:cytoplasm"/>
    <property type="evidence" value="ECO:0007669"/>
    <property type="project" value="UniProtKB-SubCell"/>
</dbReference>
<dbReference type="GO" id="GO:0003676">
    <property type="term" value="F:nucleic acid binding"/>
    <property type="evidence" value="ECO:0007669"/>
    <property type="project" value="InterPro"/>
</dbReference>
<dbReference type="GO" id="GO:0016430">
    <property type="term" value="F:tRNA (adenine-N6)-methyltransferase activity"/>
    <property type="evidence" value="ECO:0007669"/>
    <property type="project" value="UniProtKB-UniRule"/>
</dbReference>
<dbReference type="GO" id="GO:0032259">
    <property type="term" value="P:methylation"/>
    <property type="evidence" value="ECO:0007669"/>
    <property type="project" value="UniProtKB-KW"/>
</dbReference>
<dbReference type="GO" id="GO:0008033">
    <property type="term" value="P:tRNA processing"/>
    <property type="evidence" value="ECO:0007669"/>
    <property type="project" value="UniProtKB-UniRule"/>
</dbReference>
<dbReference type="CDD" id="cd02440">
    <property type="entry name" value="AdoMet_MTases"/>
    <property type="match status" value="1"/>
</dbReference>
<dbReference type="FunFam" id="3.40.50.150:FF:000087">
    <property type="entry name" value="tRNA1(Val) (adenine(37)-N6)-methyltransferase"/>
    <property type="match status" value="1"/>
</dbReference>
<dbReference type="Gene3D" id="3.40.50.150">
    <property type="entry name" value="Vaccinia Virus protein VP39"/>
    <property type="match status" value="1"/>
</dbReference>
<dbReference type="HAMAP" id="MF_01872">
    <property type="entry name" value="tRNA_methyltr_YfiC"/>
    <property type="match status" value="1"/>
</dbReference>
<dbReference type="InterPro" id="IPR002052">
    <property type="entry name" value="DNA_methylase_N6_adenine_CS"/>
</dbReference>
<dbReference type="InterPro" id="IPR029063">
    <property type="entry name" value="SAM-dependent_MTases_sf"/>
</dbReference>
<dbReference type="InterPro" id="IPR007848">
    <property type="entry name" value="Small_mtfrase_dom"/>
</dbReference>
<dbReference type="InterPro" id="IPR050210">
    <property type="entry name" value="tRNA_Adenine-N(6)_MTase"/>
</dbReference>
<dbReference type="InterPro" id="IPR022882">
    <property type="entry name" value="tRNA_adenine-N6_MeTrfase"/>
</dbReference>
<dbReference type="NCBIfam" id="NF047853">
    <property type="entry name" value="tRm6a37MtseTrmN"/>
    <property type="match status" value="1"/>
</dbReference>
<dbReference type="PANTHER" id="PTHR47739">
    <property type="entry name" value="TRNA1(VAL) (ADENINE(37)-N6)-METHYLTRANSFERASE"/>
    <property type="match status" value="1"/>
</dbReference>
<dbReference type="PANTHER" id="PTHR47739:SF1">
    <property type="entry name" value="TRNA1(VAL) (ADENINE(37)-N6)-METHYLTRANSFERASE"/>
    <property type="match status" value="1"/>
</dbReference>
<dbReference type="Pfam" id="PF05175">
    <property type="entry name" value="MTS"/>
    <property type="match status" value="1"/>
</dbReference>
<dbReference type="SUPFAM" id="SSF53335">
    <property type="entry name" value="S-adenosyl-L-methionine-dependent methyltransferases"/>
    <property type="match status" value="1"/>
</dbReference>
<dbReference type="PROSITE" id="PS00092">
    <property type="entry name" value="N6_MTASE"/>
    <property type="match status" value="1"/>
</dbReference>
<comment type="function">
    <text evidence="1">Specifically methylates the adenine in position 37 of tRNA(1)(Val) (anticodon cmo5UAC).</text>
</comment>
<comment type="catalytic activity">
    <reaction evidence="1">
        <text>adenosine(37) in tRNA1(Val) + S-adenosyl-L-methionine = N(6)-methyladenosine(37) in tRNA1(Val) + S-adenosyl-L-homocysteine + H(+)</text>
        <dbReference type="Rhea" id="RHEA:43160"/>
        <dbReference type="Rhea" id="RHEA-COMP:10369"/>
        <dbReference type="Rhea" id="RHEA-COMP:10370"/>
        <dbReference type="ChEBI" id="CHEBI:15378"/>
        <dbReference type="ChEBI" id="CHEBI:57856"/>
        <dbReference type="ChEBI" id="CHEBI:59789"/>
        <dbReference type="ChEBI" id="CHEBI:74411"/>
        <dbReference type="ChEBI" id="CHEBI:74449"/>
        <dbReference type="EC" id="2.1.1.223"/>
    </reaction>
</comment>
<comment type="subcellular location">
    <subcellularLocation>
        <location evidence="1">Cytoplasm</location>
    </subcellularLocation>
</comment>
<comment type="similarity">
    <text evidence="1">Belongs to the methyltransferase superfamily. tRNA (adenine-N(6)-)-methyltransferase family.</text>
</comment>
<accession>B2TYI8</accession>
<keyword id="KW-0963">Cytoplasm</keyword>
<keyword id="KW-0489">Methyltransferase</keyword>
<keyword id="KW-1185">Reference proteome</keyword>
<keyword id="KW-0949">S-adenosyl-L-methionine</keyword>
<keyword id="KW-0808">Transferase</keyword>
<keyword id="KW-0819">tRNA processing</keyword>
<reference key="1">
    <citation type="submission" date="2008-05" db="EMBL/GenBank/DDBJ databases">
        <title>Complete sequence of Shigella boydii serotype 18 strain BS512.</title>
        <authorList>
            <person name="Rasko D.A."/>
            <person name="Rosovitz M."/>
            <person name="Maurelli A.T."/>
            <person name="Myers G."/>
            <person name="Seshadri R."/>
            <person name="Cer R."/>
            <person name="Jiang L."/>
            <person name="Ravel J."/>
            <person name="Sebastian Y."/>
        </authorList>
    </citation>
    <scope>NUCLEOTIDE SEQUENCE [LARGE SCALE GENOMIC DNA]</scope>
    <source>
        <strain>CDC 3083-94 / BS512</strain>
    </source>
</reference>
<gene>
    <name evidence="1" type="primary">yfiC</name>
    <name type="ordered locus">SbBS512_E2942</name>
</gene>
<protein>
    <recommendedName>
        <fullName evidence="1">tRNA1(Val) (adenine(37)-N6)-methyltransferase</fullName>
        <ecNumber evidence="1">2.1.1.223</ecNumber>
    </recommendedName>
    <alternativeName>
        <fullName evidence="1">tRNA m6A37 methyltransferase</fullName>
    </alternativeName>
</protein>
<organism>
    <name type="scientific">Shigella boydii serotype 18 (strain CDC 3083-94 / BS512)</name>
    <dbReference type="NCBI Taxonomy" id="344609"/>
    <lineage>
        <taxon>Bacteria</taxon>
        <taxon>Pseudomonadati</taxon>
        <taxon>Pseudomonadota</taxon>
        <taxon>Gammaproteobacteria</taxon>
        <taxon>Enterobacterales</taxon>
        <taxon>Enterobacteriaceae</taxon>
        <taxon>Shigella</taxon>
    </lineage>
</organism>
<proteinExistence type="inferred from homology"/>
<evidence type="ECO:0000255" key="1">
    <source>
        <dbReference type="HAMAP-Rule" id="MF_01872"/>
    </source>
</evidence>
<name>TRMN6_SHIB3</name>
<sequence>MSQSTSVLRRNGFTFKQFFVAHDRCAMKVGTDGILLGAWAPVAGVKRCLDIGAGSGLLALMLAQRTSDSVIIDAVELESEAAAQAQENINQSPWAERINVHTADIQQWLTQQTVRFDLIISNPPYYQQGVECAIPQREQARYTTTLDHPSLLTCAAECITEEGFFCVVLPEQIGNGFTELALSMGWHLRLRTDVAENEARLPHRVLLAFSPQAGECFSDRLVIRGPDQNYSEAYTALTQAFYLFM</sequence>